<dbReference type="EMBL" id="U18345">
    <property type="protein sequence ID" value="AAA86093.1"/>
    <property type="molecule type" value="Genomic_DNA"/>
</dbReference>
<dbReference type="EMBL" id="L38619">
    <property type="protein sequence ID" value="AAA82972.1"/>
    <property type="molecule type" value="Genomic_DNA"/>
</dbReference>
<dbReference type="EMBL" id="D49445">
    <property type="protein sequence ID" value="BAA08433.1"/>
    <property type="molecule type" value="Genomic_DNA"/>
</dbReference>
<dbReference type="EMBL" id="U70214">
    <property type="protein sequence ID" value="AAB08620.1"/>
    <property type="molecule type" value="Genomic_DNA"/>
</dbReference>
<dbReference type="EMBL" id="U00096">
    <property type="protein sequence ID" value="AAC73303.1"/>
    <property type="molecule type" value="Genomic_DNA"/>
</dbReference>
<dbReference type="EMBL" id="AP009048">
    <property type="protein sequence ID" value="BAA77868.1"/>
    <property type="molecule type" value="Genomic_DNA"/>
</dbReference>
<dbReference type="PIR" id="H64743">
    <property type="entry name" value="H64743"/>
</dbReference>
<dbReference type="RefSeq" id="NP_414734.1">
    <property type="nucleotide sequence ID" value="NC_000913.3"/>
</dbReference>
<dbReference type="RefSeq" id="WP_000239163.1">
    <property type="nucleotide sequence ID" value="NZ_SSZK01000004.1"/>
</dbReference>
<dbReference type="PDB" id="2Z4H">
    <property type="method" value="X-ray"/>
    <property type="resolution" value="2.80 A"/>
    <property type="chains" value="A/B=21-236"/>
</dbReference>
<dbReference type="PDB" id="2Z4I">
    <property type="method" value="X-ray"/>
    <property type="resolution" value="2.60 A"/>
    <property type="chains" value="A/B=21-236"/>
</dbReference>
<dbReference type="PDBsum" id="2Z4H"/>
<dbReference type="PDBsum" id="2Z4I"/>
<dbReference type="SMR" id="P40710"/>
<dbReference type="BioGRID" id="4260842">
    <property type="interactions" value="212"/>
</dbReference>
<dbReference type="DIP" id="DIP-9353N"/>
<dbReference type="FunCoup" id="P40710">
    <property type="interactions" value="50"/>
</dbReference>
<dbReference type="IntAct" id="P40710">
    <property type="interactions" value="3"/>
</dbReference>
<dbReference type="STRING" id="511145.b0192"/>
<dbReference type="jPOST" id="P40710"/>
<dbReference type="PaxDb" id="511145-b0192"/>
<dbReference type="EnsemblBacteria" id="AAC73303">
    <property type="protein sequence ID" value="AAC73303"/>
    <property type="gene ID" value="b0192"/>
</dbReference>
<dbReference type="GeneID" id="946782"/>
<dbReference type="KEGG" id="ecj:JW0188"/>
<dbReference type="KEGG" id="eco:b0192"/>
<dbReference type="KEGG" id="ecoc:C3026_00890"/>
<dbReference type="PATRIC" id="fig|1411691.4.peg.2086"/>
<dbReference type="EchoBASE" id="EB2058"/>
<dbReference type="eggNOG" id="COG3015">
    <property type="taxonomic scope" value="Bacteria"/>
</dbReference>
<dbReference type="HOGENOM" id="CLU_1219320_0_0_6"/>
<dbReference type="InParanoid" id="P40710"/>
<dbReference type="OMA" id="GTWVMNQ"/>
<dbReference type="OrthoDB" id="5348860at2"/>
<dbReference type="BioCyc" id="EcoCyc:EG12137-MONOMER"/>
<dbReference type="EvolutionaryTrace" id="P40710"/>
<dbReference type="PRO" id="PR:P40710"/>
<dbReference type="Proteomes" id="UP000000625">
    <property type="component" value="Chromosome"/>
</dbReference>
<dbReference type="GO" id="GO:0009279">
    <property type="term" value="C:cell outer membrane"/>
    <property type="evidence" value="ECO:0000314"/>
    <property type="project" value="EcoCyc"/>
</dbReference>
<dbReference type="GO" id="GO:0042802">
    <property type="term" value="F:identical protein binding"/>
    <property type="evidence" value="ECO:0000353"/>
    <property type="project" value="IntAct"/>
</dbReference>
<dbReference type="GO" id="GO:0007155">
    <property type="term" value="P:cell adhesion"/>
    <property type="evidence" value="ECO:0007669"/>
    <property type="project" value="UniProtKB-KW"/>
</dbReference>
<dbReference type="GO" id="GO:0036460">
    <property type="term" value="P:cellular response to cell envelope stress"/>
    <property type="evidence" value="ECO:0000269"/>
    <property type="project" value="EcoCyc"/>
</dbReference>
<dbReference type="GO" id="GO:0010810">
    <property type="term" value="P:regulation of cell-substrate adhesion"/>
    <property type="evidence" value="ECO:0000315"/>
    <property type="project" value="EcoCyc"/>
</dbReference>
<dbReference type="GO" id="GO:1990169">
    <property type="term" value="P:stress response to copper ion"/>
    <property type="evidence" value="ECO:0000315"/>
    <property type="project" value="EcoCyc"/>
</dbReference>
<dbReference type="FunFam" id="2.40.128.300:FF:000001">
    <property type="entry name" value="Copper homeostasis/adhesion lipoprotein NlpE"/>
    <property type="match status" value="1"/>
</dbReference>
<dbReference type="Gene3D" id="2.40.128.300">
    <property type="match status" value="1"/>
</dbReference>
<dbReference type="Gene3D" id="2.40.50.540">
    <property type="match status" value="1"/>
</dbReference>
<dbReference type="InterPro" id="IPR007298">
    <property type="entry name" value="Cu-R_lipoprotein_NlpE"/>
</dbReference>
<dbReference type="InterPro" id="IPR033450">
    <property type="entry name" value="NlpE_C"/>
</dbReference>
<dbReference type="InterPro" id="IPR038139">
    <property type="entry name" value="NlpE_C_sf"/>
</dbReference>
<dbReference type="InterPro" id="IPR043176">
    <property type="entry name" value="NlpE_N_sf"/>
</dbReference>
<dbReference type="NCBIfam" id="NF007814">
    <property type="entry name" value="PRK10523.1"/>
    <property type="match status" value="1"/>
</dbReference>
<dbReference type="Pfam" id="PF04170">
    <property type="entry name" value="NlpE"/>
    <property type="match status" value="1"/>
</dbReference>
<dbReference type="Pfam" id="PF17185">
    <property type="entry name" value="NlpE_C"/>
    <property type="match status" value="1"/>
</dbReference>
<dbReference type="PROSITE" id="PS51257">
    <property type="entry name" value="PROKAR_LIPOPROTEIN"/>
    <property type="match status" value="1"/>
</dbReference>
<name>NLPE_ECOLI</name>
<evidence type="ECO:0000255" key="1">
    <source>
        <dbReference type="PROSITE-ProRule" id="PRU00303"/>
    </source>
</evidence>
<evidence type="ECO:0000269" key="2">
    <source>
    </source>
</evidence>
<evidence type="ECO:0000269" key="3">
    <source>
    </source>
</evidence>
<evidence type="ECO:0000269" key="4">
    <source>
    </source>
</evidence>
<evidence type="ECO:0000269" key="5">
    <source>
    </source>
</evidence>
<evidence type="ECO:0000269" key="6">
    <source>
    </source>
</evidence>
<evidence type="ECO:0000269" key="7">
    <source ref="4"/>
</evidence>
<evidence type="ECO:0000303" key="8">
    <source>
    </source>
</evidence>
<evidence type="ECO:0000303" key="9">
    <source>
    </source>
</evidence>
<evidence type="ECO:0000303" key="10">
    <source>
    </source>
</evidence>
<evidence type="ECO:0000305" key="11">
    <source>
    </source>
</evidence>
<evidence type="ECO:0000305" key="12">
    <source>
    </source>
</evidence>
<evidence type="ECO:0000305" key="13">
    <source>
    </source>
</evidence>
<evidence type="ECO:0007829" key="14">
    <source>
        <dbReference type="PDB" id="2Z4H"/>
    </source>
</evidence>
<evidence type="ECO:0007829" key="15">
    <source>
        <dbReference type="PDB" id="2Z4I"/>
    </source>
</evidence>
<protein>
    <recommendedName>
        <fullName evidence="10">Lipoprotein NlpE</fullName>
    </recommendedName>
    <alternativeName>
        <fullName evidence="9">Copper homeostasis protein CutF</fullName>
    </alternativeName>
</protein>
<proteinExistence type="evidence at protein level"/>
<keyword id="KW-0002">3D-structure</keyword>
<keyword id="KW-0130">Cell adhesion</keyword>
<keyword id="KW-0998">Cell outer membrane</keyword>
<keyword id="KW-0186">Copper</keyword>
<keyword id="KW-1015">Disulfide bond</keyword>
<keyword id="KW-0449">Lipoprotein</keyword>
<keyword id="KW-0472">Membrane</keyword>
<keyword id="KW-0564">Palmitate</keyword>
<keyword id="KW-1185">Reference proteome</keyword>
<keyword id="KW-0732">Signal</keyword>
<sequence length="236" mass="25844">MVKKAIVTAMAVISLFTLMGCNNRAEVDTLSPAQAAELKPMPQSWRGVLPCADCEGIETSLFLEKDGTWVMNERYLGAREEPSSFASYGTWARTADKLVLTDSKGEKSYYRAKGDALEMLDREGNPIESQFNYTLEAAQSSLPMTPMTLRGMYFYMADAATFTDCATGKRFMVANNAELERSYLAARGHSEKPVLLSVEGHFTLEGNPDTGAPTKVLAPDTAGKFYPNQDCSSLGQ</sequence>
<organism>
    <name type="scientific">Escherichia coli (strain K12)</name>
    <dbReference type="NCBI Taxonomy" id="83333"/>
    <lineage>
        <taxon>Bacteria</taxon>
        <taxon>Pseudomonadati</taxon>
        <taxon>Pseudomonadota</taxon>
        <taxon>Gammaproteobacteria</taxon>
        <taxon>Enterobacterales</taxon>
        <taxon>Enterobacteriaceae</taxon>
        <taxon>Escherichia</taxon>
    </lineage>
</organism>
<comment type="function">
    <text evidence="2 3 4 6">Involved in copper homeostasis, could be involved in both copper efflux and the delivery of copper to copper-dependent enzymes (PubMed:7635807). Required for efficient binding of stationary phase cells to hydrophobic surfaces, part of the process of biofilm formation (PubMed:11830644). Functions during envelope stress responses; when overproduced induces degP through the activation of the two-component envelope stress response system CpxA/CpxR (PubMed:15252048, PubMed:7635808). DegP induction seems to require membrane anchoring of this protein (PubMed:15252048). Structural changes and/or interaction of the CXXC motif with its environment may lead to activation of the Cpx stress response (PubMed:17698001).</text>
</comment>
<comment type="subunit">
    <text evidence="4">Probably exists as a monomer in vivo, can however form homodimers which swap domains (PubMed:17698001).</text>
</comment>
<comment type="interaction">
    <interactant intactId="EBI-1116525">
        <id>P40710</id>
    </interactant>
    <interactant intactId="EBI-1116525">
        <id>P40710</id>
        <label>nlpE</label>
    </interactant>
    <organismsDiffer>false</organismsDiffer>
    <experiments>3</experiments>
</comment>
<comment type="subcellular location">
    <subcellularLocation>
        <location evidence="3 13">Cell outer membrane</location>
        <topology evidence="11 13">Lipid-anchor</topology>
    </subcellularLocation>
</comment>
<comment type="domain">
    <text evidence="4">The mature protein has 2 domains, the N-terminus (residues 21-100) and the C-terminus (residues 126-236) joined by a flexible linker; both domains form beta-barrels. In the crystal structure of the soluble mutant (Ala-21) the N-terminus of 1 subunit interacts with the C-terminus of the other.</text>
</comment>
<comment type="PTM">
    <text evidence="6">Palmitoylated.</text>
</comment>
<comment type="PTM">
    <text evidence="7">Seems to only form a disulfide bond between Cys-165 and Cys-231. The 2 other cysteine residues may however be chemically active.</text>
</comment>
<comment type="disruption phenotype">
    <text evidence="2 5 6">No visible phenotype (PubMed:7635808). Slightly copper sensitive (PubMed:7635807). Decreased numbers of stationary phase cells bind to hydrophobic surfaces, cellular adhesion has altered dynamic properties; no induction of cpxR when cells bind to hydrophobic surfaces (PubMed:11830644).</text>
</comment>
<reference key="1">
    <citation type="journal article" date="1995" name="J. Bacteriol.">
        <title>Overproduction of NlpE, a new outer membrane lipoprotein, suppresses the toxicity of periplasmic LacZ by activation of the Cpx signal transduction pathway.</title>
        <authorList>
            <person name="Snyder W.B."/>
            <person name="Davis L.J."/>
            <person name="Danese P.N."/>
            <person name="Cosma C.L."/>
            <person name="Silhavy T.J."/>
        </authorList>
    </citation>
    <scope>NUCLEOTIDE SEQUENCE [GENOMIC DNA]</scope>
    <scope>SUBCELLULAR LOCATION</scope>
    <scope>DISRUPTION PHENOTYPE</scope>
    <scope>PALMITOYLATION AT CYS-21</scope>
    <source>
        <strain>K12 / MC4100 / ATCC 35695 / DSM 6574</strain>
    </source>
</reference>
<reference key="2">
    <citation type="journal article" date="1995" name="J. Bacteriol.">
        <title>Identification of cutC and cutF (nlpE) genes involved in copper tolerance in Escherichia coli.</title>
        <authorList>
            <person name="Gupta S.D."/>
            <person name="Lee B.T.O."/>
            <person name="Camakaris J."/>
            <person name="Wu H.C."/>
        </authorList>
    </citation>
    <scope>NUCLEOTIDE SEQUENCE [GENOMIC DNA]</scope>
    <scope>FUNCTION</scope>
    <scope>DISRUPTION PHENOTYPE</scope>
    <source>
        <strain>K12 / MC4100 / ATCC 35695 / DSM 6574</strain>
    </source>
</reference>
<reference key="3">
    <citation type="submission" date="1995-12" db="EMBL/GenBank/DDBJ databases">
        <authorList>
            <person name="Yamamoto Y."/>
        </authorList>
    </citation>
    <scope>NUCLEOTIDE SEQUENCE [GENOMIC DNA]</scope>
    <source>
        <strain>K12 / W3110 / ATCC 27325 / DSM 5911</strain>
    </source>
</reference>
<reference key="4">
    <citation type="submission" date="1996-02" db="EMBL/GenBank/DDBJ databases">
        <title>Systematic sequencing of the Escherichia coli genome: analysis of the 4.0 - 6.0 min (189,987 - 281,416bp) region.</title>
        <authorList>
            <person name="Takemoto K."/>
            <person name="Mori H."/>
            <person name="Murayama N."/>
            <person name="Kataoka K."/>
            <person name="Yano M."/>
            <person name="Itoh T."/>
            <person name="Yamamoto Y."/>
            <person name="Inokuchi H."/>
            <person name="Miki T."/>
            <person name="Hatada E."/>
            <person name="Fukuda R."/>
            <person name="Ichihara S."/>
            <person name="Mizuno T."/>
            <person name="Makino K."/>
            <person name="Nakata A."/>
            <person name="Yura T."/>
            <person name="Sampei G."/>
            <person name="Mizobuchi K."/>
        </authorList>
    </citation>
    <scope>NUCLEOTIDE SEQUENCE [LARGE SCALE GENOMIC DNA]</scope>
    <source>
        <strain>K12 / W3110 / ATCC 27325 / DSM 5911</strain>
    </source>
</reference>
<reference key="5">
    <citation type="submission" date="1997-01" db="EMBL/GenBank/DDBJ databases">
        <title>Sequence of minutes 4-25 of Escherichia coli.</title>
        <authorList>
            <person name="Chung E."/>
            <person name="Allen E."/>
            <person name="Araujo R."/>
            <person name="Aparicio A.M."/>
            <person name="Davis K."/>
            <person name="Duncan M."/>
            <person name="Federspiel N."/>
            <person name="Hyman R."/>
            <person name="Kalman S."/>
            <person name="Komp C."/>
            <person name="Kurdi O."/>
            <person name="Lew H."/>
            <person name="Lin D."/>
            <person name="Namath A."/>
            <person name="Oefner P."/>
            <person name="Roberts D."/>
            <person name="Schramm S."/>
            <person name="Davis R.W."/>
        </authorList>
    </citation>
    <scope>NUCLEOTIDE SEQUENCE [LARGE SCALE GENOMIC DNA]</scope>
    <source>
        <strain>K12 / MG1655 / ATCC 47076</strain>
    </source>
</reference>
<reference key="6">
    <citation type="journal article" date="1997" name="Science">
        <title>The complete genome sequence of Escherichia coli K-12.</title>
        <authorList>
            <person name="Blattner F.R."/>
            <person name="Plunkett G. III"/>
            <person name="Bloch C.A."/>
            <person name="Perna N.T."/>
            <person name="Burland V."/>
            <person name="Riley M."/>
            <person name="Collado-Vides J."/>
            <person name="Glasner J.D."/>
            <person name="Rode C.K."/>
            <person name="Mayhew G.F."/>
            <person name="Gregor J."/>
            <person name="Davis N.W."/>
            <person name="Kirkpatrick H.A."/>
            <person name="Goeden M.A."/>
            <person name="Rose D.J."/>
            <person name="Mau B."/>
            <person name="Shao Y."/>
        </authorList>
    </citation>
    <scope>NUCLEOTIDE SEQUENCE [LARGE SCALE GENOMIC DNA]</scope>
    <source>
        <strain>K12 / MG1655 / ATCC 47076</strain>
    </source>
</reference>
<reference key="7">
    <citation type="journal article" date="2006" name="Mol. Syst. Biol.">
        <title>Highly accurate genome sequences of Escherichia coli K-12 strains MG1655 and W3110.</title>
        <authorList>
            <person name="Hayashi K."/>
            <person name="Morooka N."/>
            <person name="Yamamoto Y."/>
            <person name="Fujita K."/>
            <person name="Isono K."/>
            <person name="Choi S."/>
            <person name="Ohtsubo E."/>
            <person name="Baba T."/>
            <person name="Wanner B.L."/>
            <person name="Mori H."/>
            <person name="Horiuchi T."/>
        </authorList>
    </citation>
    <scope>NUCLEOTIDE SEQUENCE [LARGE SCALE GENOMIC DNA]</scope>
    <source>
        <strain>K12 / W3110 / ATCC 27325 / DSM 5911</strain>
    </source>
</reference>
<reference key="8">
    <citation type="journal article" date="2002" name="Proc. Natl. Acad. Sci. U.S.A.">
        <title>Surface sensing and adhesion of Escherichia coli controlled by the Cpx-signaling pathway.</title>
        <authorList>
            <person name="Otto K."/>
            <person name="Silhavy T.J."/>
        </authorList>
    </citation>
    <scope>FUNCTION IN BIOFILM FORMATION</scope>
    <scope>DISRUPTION PHENOTYPE</scope>
    <source>
        <strain>K12 / MC4100 / ATCC 35695 / DSM 6574</strain>
    </source>
</reference>
<reference key="9">
    <citation type="journal article" date="2004" name="J. Biol. Chem.">
        <title>Effects of lipoprotein overproduction on the induction of DegP (HtrA) involved in quality control in the Escherichia coli periplasm.</title>
        <authorList>
            <person name="Miyadai H."/>
            <person name="Tanaka-Masuda K."/>
            <person name="Matsuyama S."/>
            <person name="Tokuda H."/>
        </authorList>
    </citation>
    <scope>FUNCTION IN DEGP EXPRESSION</scope>
    <scope>SUBCELLULAR LOCATION</scope>
    <scope>MUTAGENESIS OF CYS-21 AND 22-ASN-ASN-23</scope>
    <source>
        <strain>K12 / MC4100 / ATCC 35695 / DSM 6574</strain>
    </source>
</reference>
<reference key="10">
    <citation type="journal article" date="2007" name="Structure">
        <title>Structural studies of the Cpx pathway activator NlpE on the outer membrane of Escherichia coli.</title>
        <authorList>
            <person name="Hirano Y."/>
            <person name="Hossain M.M."/>
            <person name="Takeda K."/>
            <person name="Tokuda H."/>
            <person name="Miki K."/>
        </authorList>
    </citation>
    <scope>X-RAY CRYSTALLOGRAPHY (2.60 ANGSTROMS) OF 21-236 IN MUTANT ALA-21</scope>
    <scope>FUNCTION</scope>
    <scope>SUBUNIT</scope>
    <scope>DOMAIN</scope>
    <scope>DISULFIDE BOND</scope>
    <scope>MUTAGENESIS OF 51-CYS--CYS-54; CYS-51; CYS-54; CYS-165 AND CYS-231</scope>
</reference>
<feature type="signal peptide">
    <location>
        <begin position="1"/>
        <end position="20"/>
    </location>
</feature>
<feature type="chain" id="PRO_0000018036" description="Lipoprotein NlpE">
    <location>
        <begin position="21"/>
        <end position="236"/>
    </location>
</feature>
<feature type="topological domain" description="Periplasmic" evidence="13">
    <location>
        <begin position="21"/>
        <end position="236"/>
    </location>
</feature>
<feature type="region of interest" description="N-terminal domain" evidence="8">
    <location>
        <begin position="21"/>
        <end position="100"/>
    </location>
</feature>
<feature type="region of interest" description="C-terminal domain" evidence="8">
    <location>
        <begin position="126"/>
        <end position="236"/>
    </location>
</feature>
<feature type="region of interest" description="Could contain a copper-binding motif" evidence="9">
    <location>
        <begin position="144"/>
        <end position="156"/>
    </location>
</feature>
<feature type="short sequence motif" description="CXXC" evidence="8">
    <location>
        <begin position="51"/>
        <end position="54"/>
    </location>
</feature>
<feature type="lipid moiety-binding region" description="N-palmitoyl cysteine" evidence="1 13">
    <location>
        <position position="21"/>
    </location>
</feature>
<feature type="lipid moiety-binding region" description="S-diacylglycerol cysteine" evidence="1">
    <location>
        <position position="21"/>
    </location>
</feature>
<feature type="disulfide bond" evidence="12">
    <location>
        <begin position="165"/>
        <end position="231"/>
    </location>
</feature>
<feature type="mutagenesis site" description="No longer induces degP when overexpressed, targeted to the periplasm." evidence="3">
    <original>C</original>
    <variation>A</variation>
    <location>
        <position position="21"/>
    </location>
</feature>
<feature type="mutagenesis site" description="Slightly stronger than normal induction of degP when overexpressed, mistargeted to inner membrane." evidence="3">
    <original>NN</original>
    <variation>DD</variation>
    <location>
        <begin position="22"/>
        <end position="23"/>
    </location>
</feature>
<feature type="mutagenesis site" description="Forms oxidized monomers." evidence="4">
    <original>CADC</original>
    <variation>SADS</variation>
    <location>
        <begin position="51"/>
        <end position="54"/>
    </location>
</feature>
<feature type="mutagenesis site" description="Forms oxidized monomers." evidence="4">
    <original>C</original>
    <variation>S</variation>
    <location>
        <position position="51"/>
    </location>
</feature>
<feature type="mutagenesis site" description="Forms oxidized monomers." evidence="4">
    <original>C</original>
    <variation>S</variation>
    <location>
        <position position="54"/>
    </location>
</feature>
<feature type="mutagenesis site" description="No oxidized monomer forms; when associated with Ser-231." evidence="4">
    <original>C</original>
    <variation>S</variation>
    <location>
        <position position="165"/>
    </location>
</feature>
<feature type="mutagenesis site" description="No oxidized monomer forms; when associated with Ser-165." evidence="4">
    <original>C</original>
    <variation>S</variation>
    <location>
        <position position="231"/>
    </location>
</feature>
<feature type="strand" evidence="15">
    <location>
        <begin position="44"/>
        <end position="51"/>
    </location>
</feature>
<feature type="strand" evidence="15">
    <location>
        <begin position="54"/>
        <end position="63"/>
    </location>
</feature>
<feature type="strand" evidence="15">
    <location>
        <begin position="67"/>
        <end position="76"/>
    </location>
</feature>
<feature type="strand" evidence="15">
    <location>
        <begin position="80"/>
        <end position="92"/>
    </location>
</feature>
<feature type="strand" evidence="15">
    <location>
        <begin position="95"/>
        <end position="102"/>
    </location>
</feature>
<feature type="strand" evidence="15">
    <location>
        <begin position="107"/>
        <end position="113"/>
    </location>
</feature>
<feature type="strand" evidence="15">
    <location>
        <begin position="116"/>
        <end position="120"/>
    </location>
</feature>
<feature type="strand" evidence="15">
    <location>
        <begin position="128"/>
        <end position="131"/>
    </location>
</feature>
<feature type="strand" evidence="15">
    <location>
        <begin position="134"/>
        <end position="137"/>
    </location>
</feature>
<feature type="strand" evidence="15">
    <location>
        <begin position="147"/>
        <end position="155"/>
    </location>
</feature>
<feature type="strand" evidence="15">
    <location>
        <begin position="160"/>
        <end position="164"/>
    </location>
</feature>
<feature type="turn" evidence="15">
    <location>
        <begin position="165"/>
        <end position="167"/>
    </location>
</feature>
<feature type="strand" evidence="15">
    <location>
        <begin position="170"/>
        <end position="173"/>
    </location>
</feature>
<feature type="helix" evidence="15">
    <location>
        <begin position="177"/>
        <end position="187"/>
    </location>
</feature>
<feature type="strand" evidence="14">
    <location>
        <begin position="189"/>
        <end position="191"/>
    </location>
</feature>
<feature type="strand" evidence="15">
    <location>
        <begin position="194"/>
        <end position="205"/>
    </location>
</feature>
<feature type="turn" evidence="15">
    <location>
        <begin position="208"/>
        <end position="210"/>
    </location>
</feature>
<feature type="strand" evidence="15">
    <location>
        <begin position="214"/>
        <end position="221"/>
    </location>
</feature>
<feature type="strand" evidence="15">
    <location>
        <begin position="225"/>
        <end position="228"/>
    </location>
</feature>
<gene>
    <name evidence="10" type="primary">nlpE</name>
    <name evidence="9" type="synonym">cutF</name>
    <name type="ordered locus">b0192</name>
    <name type="ordered locus">JW0188</name>
</gene>
<accession>P40710</accession>